<accession>Q8N431</accession>
<accession>D3DWQ7</accession>
<accession>Q7Z4T0</accession>
<accession>Q8NA49</accession>
<protein>
    <recommendedName>
        <fullName>Ras-GEF domain-containing family member 1C</fullName>
    </recommendedName>
</protein>
<evidence type="ECO:0000250" key="1"/>
<evidence type="ECO:0000255" key="2">
    <source>
        <dbReference type="PROSITE-ProRule" id="PRU00135"/>
    </source>
</evidence>
<evidence type="ECO:0000255" key="3">
    <source>
        <dbReference type="PROSITE-ProRule" id="PRU00168"/>
    </source>
</evidence>
<evidence type="ECO:0000256" key="4">
    <source>
        <dbReference type="SAM" id="MobiDB-lite"/>
    </source>
</evidence>
<evidence type="ECO:0000303" key="5">
    <source>
    </source>
</evidence>
<evidence type="ECO:0000305" key="6"/>
<comment type="function">
    <text evidence="1">Guanine nucleotide exchange factor (GEF).</text>
</comment>
<comment type="alternative products">
    <event type="alternative splicing"/>
    <isoform>
        <id>Q8N431-1</id>
        <name>1</name>
        <sequence type="displayed"/>
    </isoform>
    <isoform>
        <id>Q8N431-2</id>
        <name>2</name>
        <sequence type="described" ref="VSP_027316"/>
    </isoform>
</comment>
<comment type="sequence caution" evidence="6">
    <conflict type="erroneous initiation">
        <sequence resource="EMBL-CDS" id="AAH36802"/>
    </conflict>
</comment>
<dbReference type="EMBL" id="AF449764">
    <property type="protein sequence ID" value="AAP97676.1"/>
    <property type="molecule type" value="mRNA"/>
</dbReference>
<dbReference type="EMBL" id="AK093160">
    <property type="protein sequence ID" value="BAC04079.1"/>
    <property type="molecule type" value="mRNA"/>
</dbReference>
<dbReference type="EMBL" id="CH471165">
    <property type="protein sequence ID" value="EAW53769.1"/>
    <property type="molecule type" value="Genomic_DNA"/>
</dbReference>
<dbReference type="EMBL" id="CH471165">
    <property type="protein sequence ID" value="EAW53770.1"/>
    <property type="molecule type" value="Genomic_DNA"/>
</dbReference>
<dbReference type="EMBL" id="BC036802">
    <property type="protein sequence ID" value="AAH36802.1"/>
    <property type="status" value="ALT_INIT"/>
    <property type="molecule type" value="mRNA"/>
</dbReference>
<dbReference type="CCDS" id="CCDS4452.1">
    <molecule id="Q8N431-1"/>
</dbReference>
<dbReference type="RefSeq" id="NP_778232.2">
    <molecule id="Q8N431-1"/>
    <property type="nucleotide sequence ID" value="NM_175062.3"/>
</dbReference>
<dbReference type="SMR" id="Q8N431"/>
<dbReference type="BioGRID" id="129103">
    <property type="interactions" value="8"/>
</dbReference>
<dbReference type="FunCoup" id="Q8N431">
    <property type="interactions" value="502"/>
</dbReference>
<dbReference type="IntAct" id="Q8N431">
    <property type="interactions" value="2"/>
</dbReference>
<dbReference type="STRING" id="9606.ENSP00000377037"/>
<dbReference type="GlyGen" id="Q8N431">
    <property type="glycosylation" value="2 sites"/>
</dbReference>
<dbReference type="iPTMnet" id="Q8N431"/>
<dbReference type="PhosphoSitePlus" id="Q8N431"/>
<dbReference type="BioMuta" id="RASGEF1C"/>
<dbReference type="DMDM" id="156633613"/>
<dbReference type="MassIVE" id="Q8N431"/>
<dbReference type="PaxDb" id="9606-ENSP00000377037"/>
<dbReference type="PeptideAtlas" id="Q8N431"/>
<dbReference type="ProteomicsDB" id="71871">
    <molecule id="Q8N431-1"/>
</dbReference>
<dbReference type="Antibodypedia" id="29571">
    <property type="antibodies" value="139 antibodies from 24 providers"/>
</dbReference>
<dbReference type="DNASU" id="255426"/>
<dbReference type="Ensembl" id="ENST00000361132.9">
    <molecule id="Q8N431-1"/>
    <property type="protein sequence ID" value="ENSP00000354963.4"/>
    <property type="gene ID" value="ENSG00000146090.16"/>
</dbReference>
<dbReference type="Ensembl" id="ENST00000393371.6">
    <molecule id="Q8N431-1"/>
    <property type="protein sequence ID" value="ENSP00000377037.2"/>
    <property type="gene ID" value="ENSG00000146090.16"/>
</dbReference>
<dbReference type="Ensembl" id="ENST00000522500.5">
    <molecule id="Q8N431-2"/>
    <property type="protein sequence ID" value="ENSP00000429114.1"/>
    <property type="gene ID" value="ENSG00000146090.16"/>
</dbReference>
<dbReference type="GeneID" id="255426"/>
<dbReference type="KEGG" id="hsa:255426"/>
<dbReference type="MANE-Select" id="ENST00000361132.9">
    <property type="protein sequence ID" value="ENSP00000354963.4"/>
    <property type="RefSeq nucleotide sequence ID" value="NM_175062.4"/>
    <property type="RefSeq protein sequence ID" value="NP_778232.2"/>
</dbReference>
<dbReference type="UCSC" id="uc003mlp.5">
    <molecule id="Q8N431-1"/>
    <property type="organism name" value="human"/>
</dbReference>
<dbReference type="AGR" id="HGNC:27400"/>
<dbReference type="CTD" id="255426"/>
<dbReference type="DisGeNET" id="255426"/>
<dbReference type="GeneCards" id="RASGEF1C"/>
<dbReference type="HGNC" id="HGNC:27400">
    <property type="gene designation" value="RASGEF1C"/>
</dbReference>
<dbReference type="HPA" id="ENSG00000146090">
    <property type="expression patterns" value="Tissue enriched (brain)"/>
</dbReference>
<dbReference type="neXtProt" id="NX_Q8N431"/>
<dbReference type="NIAGADS" id="ENSG00000146090"/>
<dbReference type="PharmGKB" id="PA134895897"/>
<dbReference type="VEuPathDB" id="HostDB:ENSG00000146090"/>
<dbReference type="eggNOG" id="KOG3541">
    <property type="taxonomic scope" value="Eukaryota"/>
</dbReference>
<dbReference type="GeneTree" id="ENSGT00940000161005"/>
<dbReference type="HOGENOM" id="CLU_022907_2_0_1"/>
<dbReference type="InParanoid" id="Q8N431"/>
<dbReference type="OMA" id="PAMTPEG"/>
<dbReference type="OrthoDB" id="20825at2759"/>
<dbReference type="PAN-GO" id="Q8N431">
    <property type="GO annotations" value="4 GO annotations based on evolutionary models"/>
</dbReference>
<dbReference type="PhylomeDB" id="Q8N431"/>
<dbReference type="TreeFam" id="TF313379"/>
<dbReference type="PathwayCommons" id="Q8N431"/>
<dbReference type="SignaLink" id="Q8N431"/>
<dbReference type="SIGNOR" id="Q8N431"/>
<dbReference type="BioGRID-ORCS" id="255426">
    <property type="hits" value="8 hits in 1146 CRISPR screens"/>
</dbReference>
<dbReference type="ChiTaRS" id="RASGEF1C">
    <property type="organism name" value="human"/>
</dbReference>
<dbReference type="GenomeRNAi" id="255426"/>
<dbReference type="Pharos" id="Q8N431">
    <property type="development level" value="Tdark"/>
</dbReference>
<dbReference type="PRO" id="PR:Q8N431"/>
<dbReference type="Proteomes" id="UP000005640">
    <property type="component" value="Chromosome 5"/>
</dbReference>
<dbReference type="RNAct" id="Q8N431">
    <property type="molecule type" value="protein"/>
</dbReference>
<dbReference type="Bgee" id="ENSG00000146090">
    <property type="expression patterns" value="Expressed in right hemisphere of cerebellum and 99 other cell types or tissues"/>
</dbReference>
<dbReference type="ExpressionAtlas" id="Q8N431">
    <property type="expression patterns" value="baseline and differential"/>
</dbReference>
<dbReference type="GO" id="GO:0005886">
    <property type="term" value="C:plasma membrane"/>
    <property type="evidence" value="ECO:0000318"/>
    <property type="project" value="GO_Central"/>
</dbReference>
<dbReference type="GO" id="GO:0005085">
    <property type="term" value="F:guanyl-nucleotide exchange factor activity"/>
    <property type="evidence" value="ECO:0000318"/>
    <property type="project" value="GO_Central"/>
</dbReference>
<dbReference type="GO" id="GO:0007265">
    <property type="term" value="P:Ras protein signal transduction"/>
    <property type="evidence" value="ECO:0000318"/>
    <property type="project" value="GO_Central"/>
</dbReference>
<dbReference type="CDD" id="cd00155">
    <property type="entry name" value="RasGEF"/>
    <property type="match status" value="1"/>
</dbReference>
<dbReference type="CDD" id="cd06224">
    <property type="entry name" value="REM"/>
    <property type="match status" value="1"/>
</dbReference>
<dbReference type="FunFam" id="1.10.840.10:FF:000008">
    <property type="entry name" value="Ras-GEF domain-containing family member 1B"/>
    <property type="match status" value="1"/>
</dbReference>
<dbReference type="Gene3D" id="1.10.840.10">
    <property type="entry name" value="Ras guanine-nucleotide exchange factors catalytic domain"/>
    <property type="match status" value="1"/>
</dbReference>
<dbReference type="Gene3D" id="1.20.870.10">
    <property type="entry name" value="Son of sevenless (SoS) protein Chain: S domain 1"/>
    <property type="match status" value="1"/>
</dbReference>
<dbReference type="InterPro" id="IPR008937">
    <property type="entry name" value="Ras-like_GEF"/>
</dbReference>
<dbReference type="InterPro" id="IPR000651">
    <property type="entry name" value="Ras-like_Gua-exchang_fac_N"/>
</dbReference>
<dbReference type="InterPro" id="IPR019804">
    <property type="entry name" value="Ras_G-nucl-exch_fac_CS"/>
</dbReference>
<dbReference type="InterPro" id="IPR023578">
    <property type="entry name" value="Ras_GEF_dom_sf"/>
</dbReference>
<dbReference type="InterPro" id="IPR001895">
    <property type="entry name" value="RASGEF_cat_dom"/>
</dbReference>
<dbReference type="InterPro" id="IPR036964">
    <property type="entry name" value="RASGEF_cat_dom_sf"/>
</dbReference>
<dbReference type="PANTHER" id="PTHR23113">
    <property type="entry name" value="GUANINE NUCLEOTIDE EXCHANGE FACTOR"/>
    <property type="match status" value="1"/>
</dbReference>
<dbReference type="PANTHER" id="PTHR23113:SF186">
    <property type="entry name" value="RAS-GEF DOMAIN-CONTAINING FAMILY MEMBER 1C"/>
    <property type="match status" value="1"/>
</dbReference>
<dbReference type="Pfam" id="PF00617">
    <property type="entry name" value="RasGEF"/>
    <property type="match status" value="1"/>
</dbReference>
<dbReference type="Pfam" id="PF00618">
    <property type="entry name" value="RasGEF_N"/>
    <property type="match status" value="1"/>
</dbReference>
<dbReference type="SMART" id="SM00147">
    <property type="entry name" value="RasGEF"/>
    <property type="match status" value="1"/>
</dbReference>
<dbReference type="SUPFAM" id="SSF48366">
    <property type="entry name" value="Ras GEF"/>
    <property type="match status" value="1"/>
</dbReference>
<dbReference type="PROSITE" id="PS00720">
    <property type="entry name" value="RASGEF"/>
    <property type="match status" value="1"/>
</dbReference>
<dbReference type="PROSITE" id="PS50009">
    <property type="entry name" value="RASGEF_CAT"/>
    <property type="match status" value="1"/>
</dbReference>
<dbReference type="PROSITE" id="PS50212">
    <property type="entry name" value="RASGEF_NTER"/>
    <property type="match status" value="1"/>
</dbReference>
<sequence>MPQTLSASDMVTPGSLSPPPTEPTDGEQAGQPLLDGAPSSASLETLIQHLVPTADYYPEKAYIFTFLLSSRLFIEPRELLARVCHLCIEQQQLDKPVLDKARVRKFGPKLLQLLAEWTETFPRDFQEESTIGHLKDVVGRIAPCDEAYRKRMHQLLQALHQKLAALRQGPEGLVGADKPISYRTKPPASIHRELLGVCSDPYTLAQQLTHVELERLRHIGPEEFVQAFVNKDPLASTKPCFSDKTSNLEAYVKWFNRLCYLVATEICMPAKKKQRAQVIEFFIDVARECFNIGNFNSLMAIISGMNMSPVSRLKKTWAKVRTAKFFILEHQMDPTGNFCNYRTALRGAAHRSLTAHSSREKIVIPFFSLLIKDIYFLNEGCANRLPNGHVNFEKFLELAKQVGEFITWKQVECPFEQDASITHYLYTAPIFSEDGLYLASYESESPENQTEKERWKALRSSILGKT</sequence>
<reference key="1">
    <citation type="submission" date="2001-11" db="EMBL/GenBank/DDBJ databases">
        <title>Homo sapiens cDNA, similar to Macaca fascicularis brain cDNA.</title>
        <authorList>
            <person name="Yu L."/>
            <person name="Guo J."/>
            <person name="She X."/>
        </authorList>
    </citation>
    <scope>NUCLEOTIDE SEQUENCE [LARGE SCALE MRNA] (ISOFORM 1)</scope>
</reference>
<reference key="2">
    <citation type="journal article" date="2004" name="Nat. Genet.">
        <title>Complete sequencing and characterization of 21,243 full-length human cDNAs.</title>
        <authorList>
            <person name="Ota T."/>
            <person name="Suzuki Y."/>
            <person name="Nishikawa T."/>
            <person name="Otsuki T."/>
            <person name="Sugiyama T."/>
            <person name="Irie R."/>
            <person name="Wakamatsu A."/>
            <person name="Hayashi K."/>
            <person name="Sato H."/>
            <person name="Nagai K."/>
            <person name="Kimura K."/>
            <person name="Makita H."/>
            <person name="Sekine M."/>
            <person name="Obayashi M."/>
            <person name="Nishi T."/>
            <person name="Shibahara T."/>
            <person name="Tanaka T."/>
            <person name="Ishii S."/>
            <person name="Yamamoto J."/>
            <person name="Saito K."/>
            <person name="Kawai Y."/>
            <person name="Isono Y."/>
            <person name="Nakamura Y."/>
            <person name="Nagahari K."/>
            <person name="Murakami K."/>
            <person name="Yasuda T."/>
            <person name="Iwayanagi T."/>
            <person name="Wagatsuma M."/>
            <person name="Shiratori A."/>
            <person name="Sudo H."/>
            <person name="Hosoiri T."/>
            <person name="Kaku Y."/>
            <person name="Kodaira H."/>
            <person name="Kondo H."/>
            <person name="Sugawara M."/>
            <person name="Takahashi M."/>
            <person name="Kanda K."/>
            <person name="Yokoi T."/>
            <person name="Furuya T."/>
            <person name="Kikkawa E."/>
            <person name="Omura Y."/>
            <person name="Abe K."/>
            <person name="Kamihara K."/>
            <person name="Katsuta N."/>
            <person name="Sato K."/>
            <person name="Tanikawa M."/>
            <person name="Yamazaki M."/>
            <person name="Ninomiya K."/>
            <person name="Ishibashi T."/>
            <person name="Yamashita H."/>
            <person name="Murakawa K."/>
            <person name="Fujimori K."/>
            <person name="Tanai H."/>
            <person name="Kimata M."/>
            <person name="Watanabe M."/>
            <person name="Hiraoka S."/>
            <person name="Chiba Y."/>
            <person name="Ishida S."/>
            <person name="Ono Y."/>
            <person name="Takiguchi S."/>
            <person name="Watanabe S."/>
            <person name="Yosida M."/>
            <person name="Hotuta T."/>
            <person name="Kusano J."/>
            <person name="Kanehori K."/>
            <person name="Takahashi-Fujii A."/>
            <person name="Hara H."/>
            <person name="Tanase T.-O."/>
            <person name="Nomura Y."/>
            <person name="Togiya S."/>
            <person name="Komai F."/>
            <person name="Hara R."/>
            <person name="Takeuchi K."/>
            <person name="Arita M."/>
            <person name="Imose N."/>
            <person name="Musashino K."/>
            <person name="Yuuki H."/>
            <person name="Oshima A."/>
            <person name="Sasaki N."/>
            <person name="Aotsuka S."/>
            <person name="Yoshikawa Y."/>
            <person name="Matsunawa H."/>
            <person name="Ichihara T."/>
            <person name="Shiohata N."/>
            <person name="Sano S."/>
            <person name="Moriya S."/>
            <person name="Momiyama H."/>
            <person name="Satoh N."/>
            <person name="Takami S."/>
            <person name="Terashima Y."/>
            <person name="Suzuki O."/>
            <person name="Nakagawa S."/>
            <person name="Senoh A."/>
            <person name="Mizoguchi H."/>
            <person name="Goto Y."/>
            <person name="Shimizu F."/>
            <person name="Wakebe H."/>
            <person name="Hishigaki H."/>
            <person name="Watanabe T."/>
            <person name="Sugiyama A."/>
            <person name="Takemoto M."/>
            <person name="Kawakami B."/>
            <person name="Yamazaki M."/>
            <person name="Watanabe K."/>
            <person name="Kumagai A."/>
            <person name="Itakura S."/>
            <person name="Fukuzumi Y."/>
            <person name="Fujimori Y."/>
            <person name="Komiyama M."/>
            <person name="Tashiro H."/>
            <person name="Tanigami A."/>
            <person name="Fujiwara T."/>
            <person name="Ono T."/>
            <person name="Yamada K."/>
            <person name="Fujii Y."/>
            <person name="Ozaki K."/>
            <person name="Hirao M."/>
            <person name="Ohmori Y."/>
            <person name="Kawabata A."/>
            <person name="Hikiji T."/>
            <person name="Kobatake N."/>
            <person name="Inagaki H."/>
            <person name="Ikema Y."/>
            <person name="Okamoto S."/>
            <person name="Okitani R."/>
            <person name="Kawakami T."/>
            <person name="Noguchi S."/>
            <person name="Itoh T."/>
            <person name="Shigeta K."/>
            <person name="Senba T."/>
            <person name="Matsumura K."/>
            <person name="Nakajima Y."/>
            <person name="Mizuno T."/>
            <person name="Morinaga M."/>
            <person name="Sasaki M."/>
            <person name="Togashi T."/>
            <person name="Oyama M."/>
            <person name="Hata H."/>
            <person name="Watanabe M."/>
            <person name="Komatsu T."/>
            <person name="Mizushima-Sugano J."/>
            <person name="Satoh T."/>
            <person name="Shirai Y."/>
            <person name="Takahashi Y."/>
            <person name="Nakagawa K."/>
            <person name="Okumura K."/>
            <person name="Nagase T."/>
            <person name="Nomura N."/>
            <person name="Kikuchi H."/>
            <person name="Masuho Y."/>
            <person name="Yamashita R."/>
            <person name="Nakai K."/>
            <person name="Yada T."/>
            <person name="Nakamura Y."/>
            <person name="Ohara O."/>
            <person name="Isogai T."/>
            <person name="Sugano S."/>
        </authorList>
    </citation>
    <scope>NUCLEOTIDE SEQUENCE [LARGE SCALE MRNA] (ISOFORM 2)</scope>
    <source>
        <tissue>Testis</tissue>
    </source>
</reference>
<reference key="3">
    <citation type="submission" date="2005-09" db="EMBL/GenBank/DDBJ databases">
        <authorList>
            <person name="Mural R.J."/>
            <person name="Istrail S."/>
            <person name="Sutton G.G."/>
            <person name="Florea L."/>
            <person name="Halpern A.L."/>
            <person name="Mobarry C.M."/>
            <person name="Lippert R."/>
            <person name="Walenz B."/>
            <person name="Shatkay H."/>
            <person name="Dew I."/>
            <person name="Miller J.R."/>
            <person name="Flanigan M.J."/>
            <person name="Edwards N.J."/>
            <person name="Bolanos R."/>
            <person name="Fasulo D."/>
            <person name="Halldorsson B.V."/>
            <person name="Hannenhalli S."/>
            <person name="Turner R."/>
            <person name="Yooseph S."/>
            <person name="Lu F."/>
            <person name="Nusskern D.R."/>
            <person name="Shue B.C."/>
            <person name="Zheng X.H."/>
            <person name="Zhong F."/>
            <person name="Delcher A.L."/>
            <person name="Huson D.H."/>
            <person name="Kravitz S.A."/>
            <person name="Mouchard L."/>
            <person name="Reinert K."/>
            <person name="Remington K.A."/>
            <person name="Clark A.G."/>
            <person name="Waterman M.S."/>
            <person name="Eichler E.E."/>
            <person name="Adams M.D."/>
            <person name="Hunkapiller M.W."/>
            <person name="Myers E.W."/>
            <person name="Venter J.C."/>
        </authorList>
    </citation>
    <scope>NUCLEOTIDE SEQUENCE [LARGE SCALE GENOMIC DNA]</scope>
</reference>
<reference key="4">
    <citation type="journal article" date="2004" name="Genome Res.">
        <title>The status, quality, and expansion of the NIH full-length cDNA project: the Mammalian Gene Collection (MGC).</title>
        <authorList>
            <consortium name="The MGC Project Team"/>
        </authorList>
    </citation>
    <scope>NUCLEOTIDE SEQUENCE [LARGE SCALE MRNA] (ISOFORM 1)</scope>
    <source>
        <tissue>Brain</tissue>
    </source>
</reference>
<proteinExistence type="evidence at protein level"/>
<organism>
    <name type="scientific">Homo sapiens</name>
    <name type="common">Human</name>
    <dbReference type="NCBI Taxonomy" id="9606"/>
    <lineage>
        <taxon>Eukaryota</taxon>
        <taxon>Metazoa</taxon>
        <taxon>Chordata</taxon>
        <taxon>Craniata</taxon>
        <taxon>Vertebrata</taxon>
        <taxon>Euteleostomi</taxon>
        <taxon>Mammalia</taxon>
        <taxon>Eutheria</taxon>
        <taxon>Euarchontoglires</taxon>
        <taxon>Primates</taxon>
        <taxon>Haplorrhini</taxon>
        <taxon>Catarrhini</taxon>
        <taxon>Hominidae</taxon>
        <taxon>Homo</taxon>
    </lineage>
</organism>
<feature type="chain" id="PRO_0000297643" description="Ras-GEF domain-containing family member 1C">
    <location>
        <begin position="1"/>
        <end position="466"/>
    </location>
</feature>
<feature type="domain" description="N-terminal Ras-GEF" evidence="2">
    <location>
        <begin position="34"/>
        <end position="164"/>
    </location>
</feature>
<feature type="domain" description="Ras-GEF" evidence="3">
    <location>
        <begin position="200"/>
        <end position="446"/>
    </location>
</feature>
<feature type="region of interest" description="Disordered" evidence="4">
    <location>
        <begin position="1"/>
        <end position="37"/>
    </location>
</feature>
<feature type="splice variant" id="VSP_027316" description="In isoform 2." evidence="5">
    <location>
        <begin position="1"/>
        <end position="151"/>
    </location>
</feature>
<gene>
    <name type="primary">RASGEF1C</name>
</gene>
<name>RGF1C_HUMAN</name>
<keyword id="KW-0025">Alternative splicing</keyword>
<keyword id="KW-0344">Guanine-nucleotide releasing factor</keyword>
<keyword id="KW-1267">Proteomics identification</keyword>
<keyword id="KW-1185">Reference proteome</keyword>